<organism>
    <name type="scientific">Shigella flexneri</name>
    <dbReference type="NCBI Taxonomy" id="623"/>
    <lineage>
        <taxon>Bacteria</taxon>
        <taxon>Pseudomonadati</taxon>
        <taxon>Pseudomonadota</taxon>
        <taxon>Gammaproteobacteria</taxon>
        <taxon>Enterobacterales</taxon>
        <taxon>Enterobacteriaceae</taxon>
        <taxon>Shigella</taxon>
    </lineage>
</organism>
<reference key="1">
    <citation type="journal article" date="2002" name="Nucleic Acids Res.">
        <title>Genome sequence of Shigella flexneri 2a: insights into pathogenicity through comparison with genomes of Escherichia coli K12 and O157.</title>
        <authorList>
            <person name="Jin Q."/>
            <person name="Yuan Z."/>
            <person name="Xu J."/>
            <person name="Wang Y."/>
            <person name="Shen Y."/>
            <person name="Lu W."/>
            <person name="Wang J."/>
            <person name="Liu H."/>
            <person name="Yang J."/>
            <person name="Yang F."/>
            <person name="Zhang X."/>
            <person name="Zhang J."/>
            <person name="Yang G."/>
            <person name="Wu H."/>
            <person name="Qu D."/>
            <person name="Dong J."/>
            <person name="Sun L."/>
            <person name="Xue Y."/>
            <person name="Zhao A."/>
            <person name="Gao Y."/>
            <person name="Zhu J."/>
            <person name="Kan B."/>
            <person name="Ding K."/>
            <person name="Chen S."/>
            <person name="Cheng H."/>
            <person name="Yao Z."/>
            <person name="He B."/>
            <person name="Chen R."/>
            <person name="Ma D."/>
            <person name="Qiang B."/>
            <person name="Wen Y."/>
            <person name="Hou Y."/>
            <person name="Yu J."/>
        </authorList>
    </citation>
    <scope>NUCLEOTIDE SEQUENCE [LARGE SCALE GENOMIC DNA]</scope>
    <source>
        <strain>301 / Serotype 2a</strain>
    </source>
</reference>
<reference key="2">
    <citation type="journal article" date="2003" name="Infect. Immun.">
        <title>Complete genome sequence and comparative genomics of Shigella flexneri serotype 2a strain 2457T.</title>
        <authorList>
            <person name="Wei J."/>
            <person name="Goldberg M.B."/>
            <person name="Burland V."/>
            <person name="Venkatesan M.M."/>
            <person name="Deng W."/>
            <person name="Fournier G."/>
            <person name="Mayhew G.F."/>
            <person name="Plunkett G. III"/>
            <person name="Rose D.J."/>
            <person name="Darling A."/>
            <person name="Mau B."/>
            <person name="Perna N.T."/>
            <person name="Payne S.M."/>
            <person name="Runyen-Janecky L.J."/>
            <person name="Zhou S."/>
            <person name="Schwartz D.C."/>
            <person name="Blattner F.R."/>
        </authorList>
    </citation>
    <scope>NUCLEOTIDE SEQUENCE [LARGE SCALE GENOMIC DNA]</scope>
    <source>
        <strain>ATCC 700930 / 2457T / Serotype 2a</strain>
    </source>
</reference>
<protein>
    <recommendedName>
        <fullName evidence="1">(4S)-4-hydroxy-5-phosphonooxypentane-2,3-dione isomerase</fullName>
        <ecNumber evidence="1">5.3.1.32</ecNumber>
    </recommendedName>
    <alternativeName>
        <fullName evidence="1">Autoinducer 2-degrading protein LsrG</fullName>
        <shortName evidence="1">AI-2-degrading protein LsrG</shortName>
    </alternativeName>
    <alternativeName>
        <fullName evidence="1">Phospho-(S)-4,5-dihydroxy-2,3-pentanedione isomerase</fullName>
    </alternativeName>
    <alternativeName>
        <fullName evidence="1">Phospho-AI-2 isomerase</fullName>
    </alternativeName>
</protein>
<gene>
    <name evidence="1" type="primary">lsrG</name>
    <name type="ordered locus">SF1577</name>
    <name type="ordered locus">S1703</name>
</gene>
<feature type="chain" id="PRO_0000351574" description="(4S)-4-hydroxy-5-phosphonooxypentane-2,3-dione isomerase">
    <location>
        <begin position="1"/>
        <end position="96"/>
    </location>
</feature>
<feature type="domain" description="ABM" evidence="1">
    <location>
        <begin position="2"/>
        <end position="91"/>
    </location>
</feature>
<sequence>MHVTLVEINVHEDKVDEFIEVFRQNHLGSVQEEGNLRFDVLQDPEVNSRFYIYEAYKDEDTVAFHKTTPHYKTCVAKLESLMTGPRKKRLFNGLMP</sequence>
<dbReference type="EC" id="5.3.1.32" evidence="1"/>
<dbReference type="EMBL" id="AE005674">
    <property type="protein sequence ID" value="AAN43165.1"/>
    <property type="molecule type" value="Genomic_DNA"/>
</dbReference>
<dbReference type="EMBL" id="AE014073">
    <property type="protein sequence ID" value="AAP17057.1"/>
    <property type="molecule type" value="Genomic_DNA"/>
</dbReference>
<dbReference type="RefSeq" id="NP_707458.1">
    <property type="nucleotide sequence ID" value="NC_004337.2"/>
</dbReference>
<dbReference type="RefSeq" id="WP_000558531.1">
    <property type="nucleotide sequence ID" value="NZ_WPGW01000239.1"/>
</dbReference>
<dbReference type="SMR" id="Q83L16"/>
<dbReference type="STRING" id="198214.SF1577"/>
<dbReference type="PaxDb" id="198214-SF1577"/>
<dbReference type="GeneID" id="1024749"/>
<dbReference type="KEGG" id="sfl:SF1577"/>
<dbReference type="KEGG" id="sfx:S1703"/>
<dbReference type="PATRIC" id="fig|198214.7.peg.1866"/>
<dbReference type="HOGENOM" id="CLU_131496_3_0_6"/>
<dbReference type="Proteomes" id="UP000001006">
    <property type="component" value="Chromosome"/>
</dbReference>
<dbReference type="Proteomes" id="UP000002673">
    <property type="component" value="Chromosome"/>
</dbReference>
<dbReference type="GO" id="GO:0005829">
    <property type="term" value="C:cytosol"/>
    <property type="evidence" value="ECO:0007669"/>
    <property type="project" value="TreeGrafter"/>
</dbReference>
<dbReference type="GO" id="GO:0002952">
    <property type="term" value="F:(4S)-4-hydroxy-5-phosphonooxypentane-2,3-dione isomerase activity"/>
    <property type="evidence" value="ECO:0007669"/>
    <property type="project" value="UniProtKB-EC"/>
</dbReference>
<dbReference type="GO" id="GO:0016491">
    <property type="term" value="F:oxidoreductase activity"/>
    <property type="evidence" value="ECO:0007669"/>
    <property type="project" value="TreeGrafter"/>
</dbReference>
<dbReference type="FunFam" id="3.30.70.100:FF:000016">
    <property type="entry name" value="(4S)-4-hydroxy-5-phosphonooxypentane-2,3-dione isomerase"/>
    <property type="match status" value="1"/>
</dbReference>
<dbReference type="Gene3D" id="3.30.70.100">
    <property type="match status" value="1"/>
</dbReference>
<dbReference type="HAMAP" id="MF_02051">
    <property type="entry name" value="LsrG"/>
    <property type="match status" value="1"/>
</dbReference>
<dbReference type="InterPro" id="IPR007138">
    <property type="entry name" value="ABM_dom"/>
</dbReference>
<dbReference type="InterPro" id="IPR050744">
    <property type="entry name" value="AI-2_Isomerase_LsrG"/>
</dbReference>
<dbReference type="InterPro" id="IPR011008">
    <property type="entry name" value="Dimeric_a/b-barrel"/>
</dbReference>
<dbReference type="InterPro" id="IPR033672">
    <property type="entry name" value="LsrG"/>
</dbReference>
<dbReference type="NCBIfam" id="NF007791">
    <property type="entry name" value="PRK10486.1"/>
    <property type="match status" value="1"/>
</dbReference>
<dbReference type="PANTHER" id="PTHR33336:SF1">
    <property type="entry name" value="(4S)-4-HYDROXY-5-PHOSPHONOOXYPENTANE-2,3-DIONE ISOMERASE"/>
    <property type="match status" value="1"/>
</dbReference>
<dbReference type="PANTHER" id="PTHR33336">
    <property type="entry name" value="QUINOL MONOOXYGENASE YGIN-RELATED"/>
    <property type="match status" value="1"/>
</dbReference>
<dbReference type="Pfam" id="PF03992">
    <property type="entry name" value="ABM"/>
    <property type="match status" value="1"/>
</dbReference>
<dbReference type="SUPFAM" id="SSF54909">
    <property type="entry name" value="Dimeric alpha+beta barrel"/>
    <property type="match status" value="1"/>
</dbReference>
<dbReference type="PROSITE" id="PS51725">
    <property type="entry name" value="ABM"/>
    <property type="match status" value="1"/>
</dbReference>
<accession>Q83L16</accession>
<accession>Q7C1J5</accession>
<evidence type="ECO:0000255" key="1">
    <source>
        <dbReference type="HAMAP-Rule" id="MF_02051"/>
    </source>
</evidence>
<proteinExistence type="inferred from homology"/>
<keyword id="KW-0963">Cytoplasm</keyword>
<keyword id="KW-0413">Isomerase</keyword>
<keyword id="KW-1185">Reference proteome</keyword>
<name>LSRG_SHIFL</name>
<comment type="function">
    <text evidence="1">Involved in the degradation of phospho-AI-2, thereby terminating induction of the lsr operon and closing the AI-2 signaling cycle. Catalyzes the conversion of (4S)-4-hydroxy-5-phosphonooxypentane-2,3-dione (P-DPD) to 3-hydroxy-5-phosphonooxypentane-2,4-dione (P-HPD).</text>
</comment>
<comment type="catalytic activity">
    <reaction evidence="1">
        <text>(2S)-2-hydroxy-3,4-dioxopentyl phosphate = 3-hydroxy-2,4-dioxopentyl phosphate</text>
        <dbReference type="Rhea" id="RHEA:44360"/>
        <dbReference type="ChEBI" id="CHEBI:71677"/>
        <dbReference type="ChEBI" id="CHEBI:84359"/>
        <dbReference type="EC" id="5.3.1.32"/>
    </reaction>
</comment>
<comment type="subunit">
    <text evidence="1">Homodimer.</text>
</comment>
<comment type="subcellular location">
    <subcellularLocation>
        <location evidence="1">Cytoplasm</location>
    </subcellularLocation>
</comment>
<comment type="similarity">
    <text evidence="1">Belongs to the LsrG family.</text>
</comment>